<comment type="function">
    <text>Regulatory photoreceptor which exists in two forms that are reversibly interconvertible by light: the Pr form that absorbs maximally in the red region of the spectrum and the Pfr form that absorbs maximally in the far-red region. Photoconversion of Pr to Pfr induces an array of morphogenic responses, whereas reconversion of Pfr to Pr cancels the induction of those responses. Pfr controls the expression of a number of nuclear genes including those encoding the small subunit of ribulose-bisphosphate carboxylase, chlorophyll A/B binding protein, protochlorophyllide reductase, rRNA, etc. It also controls the expression of its own gene(s) in a negative feedback fashion.</text>
</comment>
<comment type="subunit">
    <text evidence="1">Homodimer.</text>
</comment>
<comment type="PTM">
    <text evidence="1">Contains one covalently linked phytochromobilin chromophore.</text>
</comment>
<comment type="similarity">
    <text evidence="5">Belongs to the phytochrome family.</text>
</comment>
<comment type="sequence caution" evidence="5">
    <conflict type="erroneous gene model prediction">
        <sequence resource="EMBL-CDS" id="ABF98917"/>
    </conflict>
</comment>
<protein>
    <recommendedName>
        <fullName>Phytochrome C</fullName>
    </recommendedName>
</protein>
<reference key="1">
    <citation type="online journal article" date="1998" name="Plant Gene Register">
        <title>Phytochrome C (PHYC) gene in rice: isolation and characterization of a complete coding sequence.</title>
        <authorList>
            <person name="Tahir M."/>
            <person name="Kanegae H."/>
            <person name="Takano M."/>
        </authorList>
        <locator>PGR98-210</locator>
    </citation>
    <scope>NUCLEOTIDE SEQUENCE [MRNA]</scope>
    <source>
        <strain>cv. Nipponbare</strain>
    </source>
</reference>
<reference key="2">
    <citation type="journal article" date="2005" name="Genome Res.">
        <title>Sequence, annotation, and analysis of synteny between rice chromosome 3 and diverged grass species.</title>
        <authorList>
            <consortium name="The rice chromosome 3 sequencing consortium"/>
            <person name="Buell C.R."/>
            <person name="Yuan Q."/>
            <person name="Ouyang S."/>
            <person name="Liu J."/>
            <person name="Zhu W."/>
            <person name="Wang A."/>
            <person name="Maiti R."/>
            <person name="Haas B."/>
            <person name="Wortman J."/>
            <person name="Pertea M."/>
            <person name="Jones K.M."/>
            <person name="Kim M."/>
            <person name="Overton L."/>
            <person name="Tsitrin T."/>
            <person name="Fadrosh D."/>
            <person name="Bera J."/>
            <person name="Weaver B."/>
            <person name="Jin S."/>
            <person name="Johri S."/>
            <person name="Reardon M."/>
            <person name="Webb K."/>
            <person name="Hill J."/>
            <person name="Moffat K."/>
            <person name="Tallon L."/>
            <person name="Van Aken S."/>
            <person name="Lewis M."/>
            <person name="Utterback T."/>
            <person name="Feldblyum T."/>
            <person name="Zismann V."/>
            <person name="Iobst S."/>
            <person name="Hsiao J."/>
            <person name="de Vazeille A.R."/>
            <person name="Salzberg S.L."/>
            <person name="White O."/>
            <person name="Fraser C.M."/>
            <person name="Yu Y."/>
            <person name="Kim H."/>
            <person name="Rambo T."/>
            <person name="Currie J."/>
            <person name="Collura K."/>
            <person name="Kernodle-Thompson S."/>
            <person name="Wei F."/>
            <person name="Kudrna K."/>
            <person name="Ammiraju J.S.S."/>
            <person name="Luo M."/>
            <person name="Goicoechea J.L."/>
            <person name="Wing R.A."/>
            <person name="Henry D."/>
            <person name="Oates R."/>
            <person name="Palmer M."/>
            <person name="Pries G."/>
            <person name="Saski C."/>
            <person name="Simmons J."/>
            <person name="Soderlund C."/>
            <person name="Nelson W."/>
            <person name="de la Bastide M."/>
            <person name="Spiegel L."/>
            <person name="Nascimento L."/>
            <person name="Huang E."/>
            <person name="Preston R."/>
            <person name="Zutavern T."/>
            <person name="Palmer L."/>
            <person name="O'Shaughnessy A."/>
            <person name="Dike S."/>
            <person name="McCombie W.R."/>
            <person name="Minx P."/>
            <person name="Cordum H."/>
            <person name="Wilson R."/>
            <person name="Jin W."/>
            <person name="Lee H.R."/>
            <person name="Jiang J."/>
            <person name="Jackson S."/>
        </authorList>
    </citation>
    <scope>NUCLEOTIDE SEQUENCE [LARGE SCALE GENOMIC DNA]</scope>
    <source>
        <strain>cv. Nipponbare</strain>
    </source>
</reference>
<reference key="3">
    <citation type="journal article" date="2005" name="Nature">
        <title>The map-based sequence of the rice genome.</title>
        <authorList>
            <consortium name="International rice genome sequencing project (IRGSP)"/>
        </authorList>
    </citation>
    <scope>NUCLEOTIDE SEQUENCE [LARGE SCALE GENOMIC DNA]</scope>
    <source>
        <strain>cv. Nipponbare</strain>
    </source>
</reference>
<reference key="4">
    <citation type="journal article" date="2008" name="Nucleic Acids Res.">
        <title>The rice annotation project database (RAP-DB): 2008 update.</title>
        <authorList>
            <consortium name="The rice annotation project (RAP)"/>
        </authorList>
    </citation>
    <scope>GENOME REANNOTATION</scope>
    <source>
        <strain>cv. Nipponbare</strain>
    </source>
</reference>
<reference key="5">
    <citation type="journal article" date="2013" name="Rice">
        <title>Improvement of the Oryza sativa Nipponbare reference genome using next generation sequence and optical map data.</title>
        <authorList>
            <person name="Kawahara Y."/>
            <person name="de la Bastide M."/>
            <person name="Hamilton J.P."/>
            <person name="Kanamori H."/>
            <person name="McCombie W.R."/>
            <person name="Ouyang S."/>
            <person name="Schwartz D.C."/>
            <person name="Tanaka T."/>
            <person name="Wu J."/>
            <person name="Zhou S."/>
            <person name="Childs K.L."/>
            <person name="Davidson R.M."/>
            <person name="Lin H."/>
            <person name="Quesada-Ocampo L."/>
            <person name="Vaillancourt B."/>
            <person name="Sakai H."/>
            <person name="Lee S.S."/>
            <person name="Kim J."/>
            <person name="Numa H."/>
            <person name="Itoh T."/>
            <person name="Buell C.R."/>
            <person name="Matsumoto T."/>
        </authorList>
    </citation>
    <scope>GENOME REANNOTATION</scope>
    <source>
        <strain>cv. Nipponbare</strain>
    </source>
</reference>
<reference key="6">
    <citation type="journal article" date="2005" name="PLoS Biol.">
        <title>The genomes of Oryza sativa: a history of duplications.</title>
        <authorList>
            <person name="Yu J."/>
            <person name="Wang J."/>
            <person name="Lin W."/>
            <person name="Li S."/>
            <person name="Li H."/>
            <person name="Zhou J."/>
            <person name="Ni P."/>
            <person name="Dong W."/>
            <person name="Hu S."/>
            <person name="Zeng C."/>
            <person name="Zhang J."/>
            <person name="Zhang Y."/>
            <person name="Li R."/>
            <person name="Xu Z."/>
            <person name="Li S."/>
            <person name="Li X."/>
            <person name="Zheng H."/>
            <person name="Cong L."/>
            <person name="Lin L."/>
            <person name="Yin J."/>
            <person name="Geng J."/>
            <person name="Li G."/>
            <person name="Shi J."/>
            <person name="Liu J."/>
            <person name="Lv H."/>
            <person name="Li J."/>
            <person name="Wang J."/>
            <person name="Deng Y."/>
            <person name="Ran L."/>
            <person name="Shi X."/>
            <person name="Wang X."/>
            <person name="Wu Q."/>
            <person name="Li C."/>
            <person name="Ren X."/>
            <person name="Wang J."/>
            <person name="Wang X."/>
            <person name="Li D."/>
            <person name="Liu D."/>
            <person name="Zhang X."/>
            <person name="Ji Z."/>
            <person name="Zhao W."/>
            <person name="Sun Y."/>
            <person name="Zhang Z."/>
            <person name="Bao J."/>
            <person name="Han Y."/>
            <person name="Dong L."/>
            <person name="Ji J."/>
            <person name="Chen P."/>
            <person name="Wu S."/>
            <person name="Liu J."/>
            <person name="Xiao Y."/>
            <person name="Bu D."/>
            <person name="Tan J."/>
            <person name="Yang L."/>
            <person name="Ye C."/>
            <person name="Zhang J."/>
            <person name="Xu J."/>
            <person name="Zhou Y."/>
            <person name="Yu Y."/>
            <person name="Zhang B."/>
            <person name="Zhuang S."/>
            <person name="Wei H."/>
            <person name="Liu B."/>
            <person name="Lei M."/>
            <person name="Yu H."/>
            <person name="Li Y."/>
            <person name="Xu H."/>
            <person name="Wei S."/>
            <person name="He X."/>
            <person name="Fang L."/>
            <person name="Zhang Z."/>
            <person name="Zhang Y."/>
            <person name="Huang X."/>
            <person name="Su Z."/>
            <person name="Tong W."/>
            <person name="Li J."/>
            <person name="Tong Z."/>
            <person name="Li S."/>
            <person name="Ye J."/>
            <person name="Wang L."/>
            <person name="Fang L."/>
            <person name="Lei T."/>
            <person name="Chen C.-S."/>
            <person name="Chen H.-C."/>
            <person name="Xu Z."/>
            <person name="Li H."/>
            <person name="Huang H."/>
            <person name="Zhang F."/>
            <person name="Xu H."/>
            <person name="Li N."/>
            <person name="Zhao C."/>
            <person name="Li S."/>
            <person name="Dong L."/>
            <person name="Huang Y."/>
            <person name="Li L."/>
            <person name="Xi Y."/>
            <person name="Qi Q."/>
            <person name="Li W."/>
            <person name="Zhang B."/>
            <person name="Hu W."/>
            <person name="Zhang Y."/>
            <person name="Tian X."/>
            <person name="Jiao Y."/>
            <person name="Liang X."/>
            <person name="Jin J."/>
            <person name="Gao L."/>
            <person name="Zheng W."/>
            <person name="Hao B."/>
            <person name="Liu S.-M."/>
            <person name="Wang W."/>
            <person name="Yuan L."/>
            <person name="Cao M."/>
            <person name="McDermott J."/>
            <person name="Samudrala R."/>
            <person name="Wang J."/>
            <person name="Wong G.K.-S."/>
            <person name="Yang H."/>
        </authorList>
    </citation>
    <scope>NUCLEOTIDE SEQUENCE [LARGE SCALE GENOMIC DNA]</scope>
    <source>
        <strain>cv. Nipponbare</strain>
    </source>
</reference>
<reference key="7">
    <citation type="journal article" date="1996" name="Mol. Biol. Evol.">
        <title>The phytochrome gene family in grasses (Poaceae): a phylogeny and evidence that grasses have a subset of the loci found in dicot angiosperms.</title>
        <authorList>
            <person name="Mathews S."/>
            <person name="Sharrock R.A."/>
        </authorList>
    </citation>
    <scope>NUCLEOTIDE SEQUENCE [GENOMIC DNA] OF 275-378</scope>
</reference>
<feature type="chain" id="PRO_0000171979" description="Phytochrome C">
    <location>
        <begin position="1"/>
        <end position="1137"/>
    </location>
</feature>
<feature type="domain" description="GAF">
    <location>
        <begin position="217"/>
        <end position="400"/>
    </location>
</feature>
<feature type="domain" description="PAS 1" evidence="3">
    <location>
        <begin position="620"/>
        <end position="690"/>
    </location>
</feature>
<feature type="domain" description="PAS 2" evidence="3">
    <location>
        <begin position="750"/>
        <end position="824"/>
    </location>
</feature>
<feature type="domain" description="Histidine kinase" evidence="2">
    <location>
        <begin position="904"/>
        <end position="1124"/>
    </location>
</feature>
<feature type="region of interest" description="Disordered" evidence="4">
    <location>
        <begin position="1"/>
        <end position="27"/>
    </location>
</feature>
<feature type="compositionally biased region" description="Low complexity" evidence="4">
    <location>
        <begin position="1"/>
        <end position="18"/>
    </location>
</feature>
<feature type="binding site" description="covalent" evidence="1">
    <location>
        <position position="322"/>
    </location>
    <ligand>
        <name>phytochromobilin</name>
        <dbReference type="ChEBI" id="CHEBI:189064"/>
    </ligand>
</feature>
<feature type="sequence conflict" description="In Ref. 7; AAB41996." evidence="5" ref="7">
    <original>F</original>
    <variation>S</variation>
    <location>
        <position position="279"/>
    </location>
</feature>
<feature type="sequence conflict" description="In Ref. 7; AAB41996." evidence="5" ref="7">
    <original>C</original>
    <variation>S</variation>
    <location>
        <position position="292"/>
    </location>
</feature>
<name>PHYC_ORYSJ</name>
<gene>
    <name type="primary">PHYC</name>
    <name type="ordered locus">Os03g0752100</name>
    <name type="ordered locus">LOC_Os03g54084</name>
    <name type="ORF">OJ1112_G08.5</name>
    <name type="ORF">OsJ_012088</name>
    <name type="ORF">OSJNBa0032E21.08</name>
    <name type="ORF">OSJNBa0047E24.9</name>
</gene>
<dbReference type="EMBL" id="AB018442">
    <property type="protein sequence ID" value="BAA74448.1"/>
    <property type="molecule type" value="mRNA"/>
</dbReference>
<dbReference type="EMBL" id="AC092556">
    <property type="protein sequence ID" value="AAR87239.1"/>
    <property type="molecule type" value="Genomic_DNA"/>
</dbReference>
<dbReference type="EMBL" id="AC135225">
    <property type="protein sequence ID" value="AAP68360.1"/>
    <property type="molecule type" value="Genomic_DNA"/>
</dbReference>
<dbReference type="EMBL" id="AF377947">
    <property type="protein sequence ID" value="AAM34402.1"/>
    <property type="molecule type" value="Genomic_DNA"/>
</dbReference>
<dbReference type="EMBL" id="DP000009">
    <property type="protein sequence ID" value="ABF98915.1"/>
    <property type="molecule type" value="Genomic_DNA"/>
</dbReference>
<dbReference type="EMBL" id="DP000009">
    <property type="protein sequence ID" value="ABF98917.1"/>
    <property type="status" value="ALT_SEQ"/>
    <property type="molecule type" value="Genomic_DNA"/>
</dbReference>
<dbReference type="EMBL" id="AP008209">
    <property type="protein sequence ID" value="BAF13210.1"/>
    <property type="molecule type" value="Genomic_DNA"/>
</dbReference>
<dbReference type="EMBL" id="AP014959">
    <property type="status" value="NOT_ANNOTATED_CDS"/>
    <property type="molecule type" value="Genomic_DNA"/>
</dbReference>
<dbReference type="EMBL" id="CM000140">
    <property type="protein sequence ID" value="EAZ28605.1"/>
    <property type="molecule type" value="Genomic_DNA"/>
</dbReference>
<dbReference type="EMBL" id="U61207">
    <property type="protein sequence ID" value="AAB41996.1"/>
    <property type="molecule type" value="Genomic_DNA"/>
</dbReference>
<dbReference type="PIR" id="T04149">
    <property type="entry name" value="T04149"/>
</dbReference>
<dbReference type="RefSeq" id="XP_015630523.1">
    <property type="nucleotide sequence ID" value="XM_015775037.1"/>
</dbReference>
<dbReference type="SMR" id="Q10CQ8"/>
<dbReference type="FunCoup" id="Q10CQ8">
    <property type="interactions" value="483"/>
</dbReference>
<dbReference type="STRING" id="39947.Q10CQ8"/>
<dbReference type="PaxDb" id="39947-Q10CQ8"/>
<dbReference type="EnsemblPlants" id="Os03t0752100-01">
    <property type="protein sequence ID" value="Os03t0752100-01"/>
    <property type="gene ID" value="Os03g0752100"/>
</dbReference>
<dbReference type="Gramene" id="Os03t0752100-01">
    <property type="protein sequence ID" value="Os03t0752100-01"/>
    <property type="gene ID" value="Os03g0752100"/>
</dbReference>
<dbReference type="KEGG" id="dosa:Os03g0752100"/>
<dbReference type="eggNOG" id="ENOG502QT1B">
    <property type="taxonomic scope" value="Eukaryota"/>
</dbReference>
<dbReference type="InParanoid" id="Q10CQ8"/>
<dbReference type="OrthoDB" id="2015534at2759"/>
<dbReference type="Proteomes" id="UP000000763">
    <property type="component" value="Chromosome 3"/>
</dbReference>
<dbReference type="Proteomes" id="UP000007752">
    <property type="component" value="Chromosome 3"/>
</dbReference>
<dbReference type="Proteomes" id="UP000059680">
    <property type="component" value="Chromosome 3"/>
</dbReference>
<dbReference type="GO" id="GO:0005634">
    <property type="term" value="C:nucleus"/>
    <property type="evidence" value="ECO:0000318"/>
    <property type="project" value="GO_Central"/>
</dbReference>
<dbReference type="GO" id="GO:0000155">
    <property type="term" value="F:phosphorelay sensor kinase activity"/>
    <property type="evidence" value="ECO:0007669"/>
    <property type="project" value="InterPro"/>
</dbReference>
<dbReference type="GO" id="GO:0009881">
    <property type="term" value="F:photoreceptor activity"/>
    <property type="evidence" value="ECO:0007669"/>
    <property type="project" value="UniProtKB-KW"/>
</dbReference>
<dbReference type="GO" id="GO:0042803">
    <property type="term" value="F:protein homodimerization activity"/>
    <property type="evidence" value="ECO:0007669"/>
    <property type="project" value="InterPro"/>
</dbReference>
<dbReference type="GO" id="GO:0009584">
    <property type="term" value="P:detection of visible light"/>
    <property type="evidence" value="ECO:0007669"/>
    <property type="project" value="InterPro"/>
</dbReference>
<dbReference type="GO" id="GO:0009585">
    <property type="term" value="P:red, far-red light phototransduction"/>
    <property type="evidence" value="ECO:0007669"/>
    <property type="project" value="InterPro"/>
</dbReference>
<dbReference type="GO" id="GO:0006355">
    <property type="term" value="P:regulation of DNA-templated transcription"/>
    <property type="evidence" value="ECO:0007669"/>
    <property type="project" value="InterPro"/>
</dbReference>
<dbReference type="CDD" id="cd16932">
    <property type="entry name" value="HATPase_Phy-like"/>
    <property type="match status" value="1"/>
</dbReference>
<dbReference type="CDD" id="cd00082">
    <property type="entry name" value="HisKA"/>
    <property type="match status" value="1"/>
</dbReference>
<dbReference type="CDD" id="cd00130">
    <property type="entry name" value="PAS"/>
    <property type="match status" value="2"/>
</dbReference>
<dbReference type="FunFam" id="3.30.450.20:FF:000034">
    <property type="entry name" value="Phytochrome"/>
    <property type="match status" value="1"/>
</dbReference>
<dbReference type="FunFam" id="3.30.450.20:FF:000039">
    <property type="entry name" value="Phytochrome"/>
    <property type="match status" value="1"/>
</dbReference>
<dbReference type="FunFam" id="3.30.450.270:FF:000001">
    <property type="entry name" value="Phytochrome"/>
    <property type="match status" value="1"/>
</dbReference>
<dbReference type="FunFam" id="3.30.565.10:FF:000064">
    <property type="entry name" value="Phytochrome"/>
    <property type="match status" value="1"/>
</dbReference>
<dbReference type="Gene3D" id="3.30.450.270">
    <property type="match status" value="1"/>
</dbReference>
<dbReference type="Gene3D" id="3.30.450.40">
    <property type="match status" value="1"/>
</dbReference>
<dbReference type="Gene3D" id="3.30.565.10">
    <property type="entry name" value="Histidine kinase-like ATPase, C-terminal domain"/>
    <property type="match status" value="1"/>
</dbReference>
<dbReference type="Gene3D" id="3.30.450.20">
    <property type="entry name" value="PAS domain"/>
    <property type="match status" value="3"/>
</dbReference>
<dbReference type="InterPro" id="IPR003018">
    <property type="entry name" value="GAF"/>
</dbReference>
<dbReference type="InterPro" id="IPR029016">
    <property type="entry name" value="GAF-like_dom_sf"/>
</dbReference>
<dbReference type="InterPro" id="IPR036890">
    <property type="entry name" value="HATPase_C_sf"/>
</dbReference>
<dbReference type="InterPro" id="IPR005467">
    <property type="entry name" value="His_kinase_dom"/>
</dbReference>
<dbReference type="InterPro" id="IPR003661">
    <property type="entry name" value="HisK_dim/P_dom"/>
</dbReference>
<dbReference type="InterPro" id="IPR000014">
    <property type="entry name" value="PAS"/>
</dbReference>
<dbReference type="InterPro" id="IPR035965">
    <property type="entry name" value="PAS-like_dom_sf"/>
</dbReference>
<dbReference type="InterPro" id="IPR013654">
    <property type="entry name" value="PAS_2"/>
</dbReference>
<dbReference type="InterPro" id="IPR013767">
    <property type="entry name" value="PAS_fold"/>
</dbReference>
<dbReference type="InterPro" id="IPR044767">
    <property type="entry name" value="Phy_HATPase-like"/>
</dbReference>
<dbReference type="InterPro" id="IPR016132">
    <property type="entry name" value="Phyto_chromo_attachment"/>
</dbReference>
<dbReference type="InterPro" id="IPR013516">
    <property type="entry name" value="Phyto_chromo_BS"/>
</dbReference>
<dbReference type="InterPro" id="IPR001294">
    <property type="entry name" value="Phytochrome"/>
</dbReference>
<dbReference type="InterPro" id="IPR012129">
    <property type="entry name" value="Phytochrome_A-E"/>
</dbReference>
<dbReference type="InterPro" id="IPR013515">
    <property type="entry name" value="Phytochrome_cen-reg"/>
</dbReference>
<dbReference type="InterPro" id="IPR043150">
    <property type="entry name" value="Phytochrome_PHY_sf"/>
</dbReference>
<dbReference type="NCBIfam" id="TIGR00229">
    <property type="entry name" value="sensory_box"/>
    <property type="match status" value="1"/>
</dbReference>
<dbReference type="PANTHER" id="PTHR47876">
    <property type="entry name" value="OS08G0260000 PROTEIN"/>
    <property type="match status" value="1"/>
</dbReference>
<dbReference type="PANTHER" id="PTHR47876:SF3">
    <property type="entry name" value="PHYTOCHROME 1"/>
    <property type="match status" value="1"/>
</dbReference>
<dbReference type="Pfam" id="PF01590">
    <property type="entry name" value="GAF"/>
    <property type="match status" value="1"/>
</dbReference>
<dbReference type="Pfam" id="PF02518">
    <property type="entry name" value="HATPase_c"/>
    <property type="match status" value="1"/>
</dbReference>
<dbReference type="Pfam" id="PF00512">
    <property type="entry name" value="HisKA"/>
    <property type="match status" value="1"/>
</dbReference>
<dbReference type="Pfam" id="PF00989">
    <property type="entry name" value="PAS"/>
    <property type="match status" value="2"/>
</dbReference>
<dbReference type="Pfam" id="PF08446">
    <property type="entry name" value="PAS_2"/>
    <property type="match status" value="1"/>
</dbReference>
<dbReference type="Pfam" id="PF00360">
    <property type="entry name" value="PHY"/>
    <property type="match status" value="1"/>
</dbReference>
<dbReference type="PIRSF" id="PIRSF000084">
    <property type="entry name" value="Phytochrome"/>
    <property type="match status" value="1"/>
</dbReference>
<dbReference type="PRINTS" id="PR01033">
    <property type="entry name" value="PHYTOCHROME"/>
</dbReference>
<dbReference type="SMART" id="SM00065">
    <property type="entry name" value="GAF"/>
    <property type="match status" value="1"/>
</dbReference>
<dbReference type="SMART" id="SM00387">
    <property type="entry name" value="HATPase_c"/>
    <property type="match status" value="1"/>
</dbReference>
<dbReference type="SMART" id="SM00388">
    <property type="entry name" value="HisKA"/>
    <property type="match status" value="1"/>
</dbReference>
<dbReference type="SMART" id="SM00091">
    <property type="entry name" value="PAS"/>
    <property type="match status" value="2"/>
</dbReference>
<dbReference type="SUPFAM" id="SSF55874">
    <property type="entry name" value="ATPase domain of HSP90 chaperone/DNA topoisomerase II/histidine kinase"/>
    <property type="match status" value="1"/>
</dbReference>
<dbReference type="SUPFAM" id="SSF55781">
    <property type="entry name" value="GAF domain-like"/>
    <property type="match status" value="2"/>
</dbReference>
<dbReference type="SUPFAM" id="SSF55785">
    <property type="entry name" value="PYP-like sensor domain (PAS domain)"/>
    <property type="match status" value="3"/>
</dbReference>
<dbReference type="PROSITE" id="PS50109">
    <property type="entry name" value="HIS_KIN"/>
    <property type="match status" value="1"/>
</dbReference>
<dbReference type="PROSITE" id="PS50112">
    <property type="entry name" value="PAS"/>
    <property type="match status" value="2"/>
</dbReference>
<dbReference type="PROSITE" id="PS00245">
    <property type="entry name" value="PHYTOCHROME_1"/>
    <property type="match status" value="1"/>
</dbReference>
<dbReference type="PROSITE" id="PS50046">
    <property type="entry name" value="PHYTOCHROME_2"/>
    <property type="match status" value="1"/>
</dbReference>
<keyword id="KW-0157">Chromophore</keyword>
<keyword id="KW-0600">Photoreceptor protein</keyword>
<keyword id="KW-0675">Receptor</keyword>
<keyword id="KW-1185">Reference proteome</keyword>
<keyword id="KW-0677">Repeat</keyword>
<keyword id="KW-0716">Sensory transduction</keyword>
<keyword id="KW-0804">Transcription</keyword>
<keyword id="KW-0805">Transcription regulation</keyword>
<evidence type="ECO:0000250" key="1"/>
<evidence type="ECO:0000255" key="2">
    <source>
        <dbReference type="PROSITE-ProRule" id="PRU00107"/>
    </source>
</evidence>
<evidence type="ECO:0000255" key="3">
    <source>
        <dbReference type="PROSITE-ProRule" id="PRU00140"/>
    </source>
</evidence>
<evidence type="ECO:0000256" key="4">
    <source>
        <dbReference type="SAM" id="MobiDB-lite"/>
    </source>
</evidence>
<evidence type="ECO:0000305" key="5"/>
<accession>Q10CQ8</accession>
<accession>P93429</accession>
<accession>Q10CQ9</accession>
<accession>Q7FUM6</accession>
<accession>Q9M7A9</accession>
<accession>Q9ZWI9</accession>
<organism>
    <name type="scientific">Oryza sativa subsp. japonica</name>
    <name type="common">Rice</name>
    <dbReference type="NCBI Taxonomy" id="39947"/>
    <lineage>
        <taxon>Eukaryota</taxon>
        <taxon>Viridiplantae</taxon>
        <taxon>Streptophyta</taxon>
        <taxon>Embryophyta</taxon>
        <taxon>Tracheophyta</taxon>
        <taxon>Spermatophyta</taxon>
        <taxon>Magnoliopsida</taxon>
        <taxon>Liliopsida</taxon>
        <taxon>Poales</taxon>
        <taxon>Poaceae</taxon>
        <taxon>BOP clade</taxon>
        <taxon>Oryzoideae</taxon>
        <taxon>Oryzeae</taxon>
        <taxon>Oryzinae</taxon>
        <taxon>Oryza</taxon>
        <taxon>Oryza sativa</taxon>
    </lineage>
</organism>
<proteinExistence type="evidence at transcript level"/>
<sequence>MSSSRSNNRATCSRSSSARSKHSARVVAQTPMDAQLHAEFEGSQRHFDYSSSVGAANRSGATTSNVSAYLQNMQRGRFVQPFGCLLAVHPETFALLAYSENAAEMLDLTPHAVPTIDQREALAVGTDVRTLFRSHSFVALQKAATFGDVNLLNPILVHARTSGKPFYAIMHRIDVGLVIDLEPVNPVDLPVTATGAIKSYKLAARAIARLQSLPSGNLSLLCDVLVREVSELTGYDRVMAYKFHEDEHGEVIAECKRSDLEPYLGLHYPATDIPQASRFLFMKNKVRMICDCSATPVKIIQDDSLTQPISICGSTLRAPHGCHAQYMASMGSVASLVMSVTINEDEDDDGDTGSDQQPKGRKLWGLMVCHHTSPRFVPFPLRYACEFLLQVFGIQINKEVELAAQAKERHILRTQTLLCDMLLRDAPVGIFTQSPNVMDLVKCDGAALYYQNQLWVLGSTPSEAEIKNIVAWLQEYHDGSTGLSTDSLVEAGYPGAAALGDVVCGMAAIKISSKDFIFWFRSHTAKEIKWGGAKHEPIDADDNGRKMHPRSSFKAFLEVVKWRSVPWEDVEMDAIHSLQLILRGSLQDEDANKNNNAKSIVTAPSDDMKKIQGLLELRTVTNEMVRLIETATAPILAVDITGSINGWNNKAAELTGLPVMEAIGKPLVDLVIDDSVEVVKQILNSALQGIEEQNLQIKLKTFNHQENNGPVILMVNACCSRDLSEKVVGVCFVAQDMTGQNIIMDKYTRIQGDYVAIVKNPSELIPPIFMINDLGSCLEWNEAMQKITGIKREDAVDKLLIGEVFTHHEYGCRVKDHGTLTKLSILMNTVISGQDPEKLLFGFFNTDGKYIESLMTATKRTDAEGKITGALCFLHVASPELQHALQVQKMSEQAAMNSFKELTYIRQELRNPLNGMQFTRNLLEPSDLTEEQRKLLASNVLCQEQLKKILHDTDLESIEQCYTEMSTVDFNLEEALNTVLMQAMPQSKEKQISIDRDWPAEVSCMHLCGDNLRLQQVLADFLACMLQFTQPAEGPIVLQVIPRMENIGSGMQIAHLEFRLVHPAPGVPEALIQEMFRHSPGASREGLGLYISQKLVKTMSGTVQYLRESESSSFIVLVEFPVAQLSTKRCKASTSKF</sequence>